<gene>
    <name evidence="1" type="primary">dadD</name>
    <name type="ordered locus">Mboo_0768</name>
</gene>
<sequence length="442" mass="47461">MTTQESADIFGNNKSILITNVNDGTGPVDIFIDAEETISDIGCEIRKRHRGEAEFIVDGAGALALPGLSNTHTHAAMSLLRGYADDMILQDWLAQKIWPLEAHLTADDVYWGTRLACLEMIRTGTTAFNDMYFFMESAAKAVDEAGIRALLCYGFIDLGDAEKRERECRATEALVAHIRGLKNSRIHAAAGPHAPYTVSPEGLKWCGEFSREQDIPVHIHLSETEKEVNDCVARHKKRPAALLDECGLLSPRTIAAHGCWLDDAECALLGKRGVSVSHNPASNMKLATHRALPYRELVAAGANVCLGTDGCASNNNLDLFEEMKIAALLQKFFWNDPTVLAAPEALGMATANGAKALGFGDGALVAGAPADLILVTTRTPANTPLHNAASNLVYACSGSAVETTICNGRVLMFDREIPGEEKVLAEAAGAAARLVRRAQTPS</sequence>
<proteinExistence type="inferred from homology"/>
<protein>
    <recommendedName>
        <fullName evidence="1">5'-deoxyadenosine deaminase</fullName>
        <shortName evidence="1">5'-dA deaminase</shortName>
        <ecNumber evidence="1">3.5.4.41</ecNumber>
    </recommendedName>
    <alternativeName>
        <fullName evidence="1">5'-methylthioadenosine deaminase</fullName>
        <shortName evidence="1">MTA deaminase</shortName>
        <ecNumber evidence="1">3.5.4.31</ecNumber>
    </alternativeName>
    <alternativeName>
        <fullName evidence="1">Adenosine deaminase</fullName>
        <ecNumber evidence="1">3.5.4.4</ecNumber>
    </alternativeName>
    <alternativeName>
        <fullName evidence="1">S-adenosylhomocysteine deaminase</fullName>
        <shortName evidence="1">SAH deaminase</shortName>
        <ecNumber evidence="1">3.5.4.28</ecNumber>
    </alternativeName>
</protein>
<dbReference type="EC" id="3.5.4.41" evidence="1"/>
<dbReference type="EC" id="3.5.4.31" evidence="1"/>
<dbReference type="EC" id="3.5.4.4" evidence="1"/>
<dbReference type="EC" id="3.5.4.28" evidence="1"/>
<dbReference type="EMBL" id="CP000780">
    <property type="protein sequence ID" value="ABS55286.1"/>
    <property type="molecule type" value="Genomic_DNA"/>
</dbReference>
<dbReference type="RefSeq" id="WP_012106309.1">
    <property type="nucleotide sequence ID" value="NC_009712.1"/>
</dbReference>
<dbReference type="SMR" id="A7I6C5"/>
<dbReference type="STRING" id="456442.Mboo_0768"/>
<dbReference type="GeneID" id="5410708"/>
<dbReference type="KEGG" id="mbn:Mboo_0768"/>
<dbReference type="eggNOG" id="arCOG00695">
    <property type="taxonomic scope" value="Archaea"/>
</dbReference>
<dbReference type="HOGENOM" id="CLU_012358_2_1_2"/>
<dbReference type="OrthoDB" id="372084at2157"/>
<dbReference type="UniPathway" id="UPA00315"/>
<dbReference type="Proteomes" id="UP000002408">
    <property type="component" value="Chromosome"/>
</dbReference>
<dbReference type="GO" id="GO:0090613">
    <property type="term" value="F:5'-deoxyadenosine deaminase activity"/>
    <property type="evidence" value="ECO:0007669"/>
    <property type="project" value="UniProtKB-UniRule"/>
</dbReference>
<dbReference type="GO" id="GO:0090614">
    <property type="term" value="F:5'-methylthioadenosine deaminase activity"/>
    <property type="evidence" value="ECO:0007669"/>
    <property type="project" value="UniProtKB-EC"/>
</dbReference>
<dbReference type="GO" id="GO:0004000">
    <property type="term" value="F:adenosine deaminase activity"/>
    <property type="evidence" value="ECO:0007669"/>
    <property type="project" value="UniProtKB-UniRule"/>
</dbReference>
<dbReference type="GO" id="GO:0046872">
    <property type="term" value="F:metal ion binding"/>
    <property type="evidence" value="ECO:0007669"/>
    <property type="project" value="UniProtKB-KW"/>
</dbReference>
<dbReference type="GO" id="GO:0050270">
    <property type="term" value="F:S-adenosylhomocysteine deaminase activity"/>
    <property type="evidence" value="ECO:0007669"/>
    <property type="project" value="UniProtKB-EC"/>
</dbReference>
<dbReference type="GO" id="GO:0006556">
    <property type="term" value="P:S-adenosylmethionine biosynthetic process"/>
    <property type="evidence" value="ECO:0007669"/>
    <property type="project" value="UniProtKB-UniRule"/>
</dbReference>
<dbReference type="CDD" id="cd01298">
    <property type="entry name" value="ATZ_TRZ_like"/>
    <property type="match status" value="1"/>
</dbReference>
<dbReference type="FunFam" id="3.20.20.140:FF:000014">
    <property type="entry name" value="5-methylthioadenosine/S-adenosylhomocysteine deaminase"/>
    <property type="match status" value="1"/>
</dbReference>
<dbReference type="Gene3D" id="3.20.20.140">
    <property type="entry name" value="Metal-dependent hydrolases"/>
    <property type="match status" value="1"/>
</dbReference>
<dbReference type="Gene3D" id="2.30.40.10">
    <property type="entry name" value="Urease, subunit C, domain 1"/>
    <property type="match status" value="1"/>
</dbReference>
<dbReference type="HAMAP" id="MF_01281">
    <property type="entry name" value="MTA_SAH_deamin"/>
    <property type="match status" value="1"/>
</dbReference>
<dbReference type="InterPro" id="IPR006680">
    <property type="entry name" value="Amidohydro-rel"/>
</dbReference>
<dbReference type="InterPro" id="IPR023512">
    <property type="entry name" value="Deaminase_MtaD/DadD"/>
</dbReference>
<dbReference type="InterPro" id="IPR011059">
    <property type="entry name" value="Metal-dep_hydrolase_composite"/>
</dbReference>
<dbReference type="InterPro" id="IPR032466">
    <property type="entry name" value="Metal_Hydrolase"/>
</dbReference>
<dbReference type="InterPro" id="IPR050287">
    <property type="entry name" value="MTA/SAH_deaminase"/>
</dbReference>
<dbReference type="PANTHER" id="PTHR43794:SF11">
    <property type="entry name" value="AMIDOHYDROLASE-RELATED DOMAIN-CONTAINING PROTEIN"/>
    <property type="match status" value="1"/>
</dbReference>
<dbReference type="PANTHER" id="PTHR43794">
    <property type="entry name" value="AMINOHYDROLASE SSNA-RELATED"/>
    <property type="match status" value="1"/>
</dbReference>
<dbReference type="Pfam" id="PF01979">
    <property type="entry name" value="Amidohydro_1"/>
    <property type="match status" value="1"/>
</dbReference>
<dbReference type="SUPFAM" id="SSF51338">
    <property type="entry name" value="Composite domain of metallo-dependent hydrolases"/>
    <property type="match status" value="1"/>
</dbReference>
<dbReference type="SUPFAM" id="SSF51556">
    <property type="entry name" value="Metallo-dependent hydrolases"/>
    <property type="match status" value="1"/>
</dbReference>
<keyword id="KW-0378">Hydrolase</keyword>
<keyword id="KW-0479">Metal-binding</keyword>
<keyword id="KW-1185">Reference proteome</keyword>
<keyword id="KW-0862">Zinc</keyword>
<feature type="chain" id="PRO_0000312477" description="5'-deoxyadenosine deaminase">
    <location>
        <begin position="1"/>
        <end position="442"/>
    </location>
</feature>
<feature type="binding site" evidence="1">
    <location>
        <position position="72"/>
    </location>
    <ligand>
        <name>Zn(2+)</name>
        <dbReference type="ChEBI" id="CHEBI:29105"/>
    </ligand>
</feature>
<feature type="binding site" evidence="1">
    <location>
        <position position="74"/>
    </location>
    <ligand>
        <name>Zn(2+)</name>
        <dbReference type="ChEBI" id="CHEBI:29105"/>
    </ligand>
</feature>
<feature type="binding site" evidence="1">
    <location>
        <position position="101"/>
    </location>
    <ligand>
        <name>substrate</name>
    </ligand>
</feature>
<feature type="binding site" evidence="1">
    <location>
        <position position="193"/>
    </location>
    <ligand>
        <name>substrate</name>
    </ligand>
</feature>
<feature type="binding site" evidence="1">
    <location>
        <position position="220"/>
    </location>
    <ligand>
        <name>Zn(2+)</name>
        <dbReference type="ChEBI" id="CHEBI:29105"/>
    </ligand>
</feature>
<feature type="binding site" evidence="1">
    <location>
        <position position="223"/>
    </location>
    <ligand>
        <name>substrate</name>
    </ligand>
</feature>
<feature type="binding site" evidence="1">
    <location>
        <position position="309"/>
    </location>
    <ligand>
        <name>substrate</name>
    </ligand>
</feature>
<feature type="binding site" evidence="1">
    <location>
        <position position="309"/>
    </location>
    <ligand>
        <name>Zn(2+)</name>
        <dbReference type="ChEBI" id="CHEBI:29105"/>
    </ligand>
</feature>
<organism>
    <name type="scientific">Methanoregula boonei (strain DSM 21154 / JCM 14090 / 6A8)</name>
    <dbReference type="NCBI Taxonomy" id="456442"/>
    <lineage>
        <taxon>Archaea</taxon>
        <taxon>Methanobacteriati</taxon>
        <taxon>Methanobacteriota</taxon>
        <taxon>Stenosarchaea group</taxon>
        <taxon>Methanomicrobia</taxon>
        <taxon>Methanomicrobiales</taxon>
        <taxon>Methanoregulaceae</taxon>
        <taxon>Methanoregula</taxon>
    </lineage>
</organism>
<comment type="function">
    <text evidence="1">Catalyzes the deamination of three SAM-derived enzymatic products, namely 5'-deoxyadenosine, S-adenosyl-L-homocysteine, and 5'-methylthioadenosine, to produce the inosine analogs. Can also deaminate adenosine. The preferred substrate for this enzyme is 5'-deoxyadenosine, but all these substrates are efficiently deaminated. Likely functions in a S-adenosyl-L-methionine (SAM) recycling pathway from S-adenosyl-L-homocysteine (SAH) produced from SAM-dependent methylation reactions. May also be involved in the recycling of 5'-deoxyadenosine, whereupon the 5'-deoxyribose moiety of 5'-deoxyinosine is further metabolized to deoxyhexoses used for the biosynthesis of aromatic amino acids in methanogens.</text>
</comment>
<comment type="catalytic activity">
    <reaction evidence="1">
        <text>5'-deoxyadenosine + H2O + H(+) = 5'-deoxyinosine + NH4(+)</text>
        <dbReference type="Rhea" id="RHEA:42892"/>
        <dbReference type="ChEBI" id="CHEBI:15377"/>
        <dbReference type="ChEBI" id="CHEBI:15378"/>
        <dbReference type="ChEBI" id="CHEBI:17319"/>
        <dbReference type="ChEBI" id="CHEBI:28938"/>
        <dbReference type="ChEBI" id="CHEBI:82775"/>
        <dbReference type="EC" id="3.5.4.41"/>
    </reaction>
    <physiologicalReaction direction="left-to-right" evidence="1">
        <dbReference type="Rhea" id="RHEA:42893"/>
    </physiologicalReaction>
</comment>
<comment type="catalytic activity">
    <reaction evidence="1">
        <text>S-adenosyl-L-homocysteine + H2O + H(+) = S-inosyl-L-homocysteine + NH4(+)</text>
        <dbReference type="Rhea" id="RHEA:20716"/>
        <dbReference type="ChEBI" id="CHEBI:15377"/>
        <dbReference type="ChEBI" id="CHEBI:15378"/>
        <dbReference type="ChEBI" id="CHEBI:28938"/>
        <dbReference type="ChEBI" id="CHEBI:57856"/>
        <dbReference type="ChEBI" id="CHEBI:57985"/>
        <dbReference type="EC" id="3.5.4.28"/>
    </reaction>
    <physiologicalReaction direction="left-to-right" evidence="1">
        <dbReference type="Rhea" id="RHEA:20717"/>
    </physiologicalReaction>
</comment>
<comment type="catalytic activity">
    <reaction evidence="1">
        <text>S-methyl-5'-thioadenosine + H2O + H(+) = S-methyl-5'-thioinosine + NH4(+)</text>
        <dbReference type="Rhea" id="RHEA:25025"/>
        <dbReference type="ChEBI" id="CHEBI:15377"/>
        <dbReference type="ChEBI" id="CHEBI:15378"/>
        <dbReference type="ChEBI" id="CHEBI:17509"/>
        <dbReference type="ChEBI" id="CHEBI:28938"/>
        <dbReference type="ChEBI" id="CHEBI:48595"/>
        <dbReference type="EC" id="3.5.4.31"/>
    </reaction>
    <physiologicalReaction direction="left-to-right" evidence="1">
        <dbReference type="Rhea" id="RHEA:25026"/>
    </physiologicalReaction>
</comment>
<comment type="catalytic activity">
    <reaction evidence="1">
        <text>adenosine + H2O + H(+) = inosine + NH4(+)</text>
        <dbReference type="Rhea" id="RHEA:24408"/>
        <dbReference type="ChEBI" id="CHEBI:15377"/>
        <dbReference type="ChEBI" id="CHEBI:15378"/>
        <dbReference type="ChEBI" id="CHEBI:16335"/>
        <dbReference type="ChEBI" id="CHEBI:17596"/>
        <dbReference type="ChEBI" id="CHEBI:28938"/>
        <dbReference type="EC" id="3.5.4.4"/>
    </reaction>
    <physiologicalReaction direction="left-to-right" evidence="1">
        <dbReference type="Rhea" id="RHEA:24409"/>
    </physiologicalReaction>
</comment>
<comment type="cofactor">
    <cofactor evidence="1">
        <name>Zn(2+)</name>
        <dbReference type="ChEBI" id="CHEBI:29105"/>
    </cofactor>
    <text evidence="1">Binds 1 zinc ion per subunit.</text>
</comment>
<comment type="pathway">
    <text evidence="1">Amino-acid biosynthesis; S-adenosyl-L-methionine biosynthesis.</text>
</comment>
<comment type="subunit">
    <text evidence="1">Homotetramer.</text>
</comment>
<comment type="miscellaneous">
    <text evidence="1">SAH is a product of SAM methyltransferases and is known to be a feedback inhibitor of these enzymes. As a result of this inhibition, organisms have evolved efficient enzymes to metabolize SAH via different pathways. The pathway found in methanogens differs from the canonical pathway, it uses the deamination of S-adenosyl-L-homocysteine to form S-inosyl-L-homocysteine for the regeneration of SAM from S-adenosyl-L-homocysteine. 5'-deoxyadenosine is a radical SAM enzyme reaction product which strongly inhibits radical SAM enzymes. A pathway for removing this product must be present in methanogens where the MTA/SAH nucleosidase which normally metabolizes this compound is absent.</text>
</comment>
<comment type="similarity">
    <text evidence="1">Belongs to the metallo-dependent hydrolases superfamily. MTA/SAH deaminase family.</text>
</comment>
<evidence type="ECO:0000255" key="1">
    <source>
        <dbReference type="HAMAP-Rule" id="MF_01281"/>
    </source>
</evidence>
<reference key="1">
    <citation type="journal article" date="2015" name="Microbiology">
        <title>Genome of Methanoregula boonei 6A8 reveals adaptations to oligotrophic peatland environments.</title>
        <authorList>
            <person name="Braeuer S."/>
            <person name="Cadillo-Quiroz H."/>
            <person name="Kyrpides N."/>
            <person name="Woyke T."/>
            <person name="Goodwin L."/>
            <person name="Detter C."/>
            <person name="Podell S."/>
            <person name="Yavitt J.B."/>
            <person name="Zinder S.H."/>
        </authorList>
    </citation>
    <scope>NUCLEOTIDE SEQUENCE [LARGE SCALE GENOMIC DNA]</scope>
    <source>
        <strain>DSM 21154 / JCM 14090 / 6A8</strain>
    </source>
</reference>
<name>DADD_METB6</name>
<accession>A7I6C5</accession>